<evidence type="ECO:0000255" key="1">
    <source>
        <dbReference type="HAMAP-Rule" id="MF_00102"/>
    </source>
</evidence>
<evidence type="ECO:0000305" key="2"/>
<feature type="chain" id="PRO_0000228333" description="4-hydroxy-tetrahydrodipicolinate reductase">
    <location>
        <begin position="1"/>
        <end position="268"/>
    </location>
</feature>
<feature type="active site" description="Proton donor/acceptor" evidence="1">
    <location>
        <position position="156"/>
    </location>
</feature>
<feature type="active site" description="Proton donor" evidence="1">
    <location>
        <position position="160"/>
    </location>
</feature>
<feature type="binding site" evidence="1">
    <location>
        <begin position="10"/>
        <end position="15"/>
    </location>
    <ligand>
        <name>NAD(+)</name>
        <dbReference type="ChEBI" id="CHEBI:57540"/>
    </ligand>
</feature>
<feature type="binding site" evidence="1">
    <location>
        <position position="36"/>
    </location>
    <ligand>
        <name>NAD(+)</name>
        <dbReference type="ChEBI" id="CHEBI:57540"/>
    </ligand>
</feature>
<feature type="binding site" evidence="1">
    <location>
        <position position="37"/>
    </location>
    <ligand>
        <name>NADP(+)</name>
        <dbReference type="ChEBI" id="CHEBI:58349"/>
    </ligand>
</feature>
<feature type="binding site" evidence="1">
    <location>
        <begin position="99"/>
        <end position="101"/>
    </location>
    <ligand>
        <name>NAD(+)</name>
        <dbReference type="ChEBI" id="CHEBI:57540"/>
    </ligand>
</feature>
<feature type="binding site" evidence="1">
    <location>
        <begin position="123"/>
        <end position="126"/>
    </location>
    <ligand>
        <name>NAD(+)</name>
        <dbReference type="ChEBI" id="CHEBI:57540"/>
    </ligand>
</feature>
<feature type="binding site" evidence="1">
    <location>
        <position position="157"/>
    </location>
    <ligand>
        <name>(S)-2,3,4,5-tetrahydrodipicolinate</name>
        <dbReference type="ChEBI" id="CHEBI:16845"/>
    </ligand>
</feature>
<feature type="binding site" evidence="1">
    <location>
        <begin position="166"/>
        <end position="167"/>
    </location>
    <ligand>
        <name>(S)-2,3,4,5-tetrahydrodipicolinate</name>
        <dbReference type="ChEBI" id="CHEBI:16845"/>
    </ligand>
</feature>
<accession>Q63QT3</accession>
<comment type="function">
    <text evidence="1">Catalyzes the conversion of 4-hydroxy-tetrahydrodipicolinate (HTPA) to tetrahydrodipicolinate.</text>
</comment>
<comment type="catalytic activity">
    <reaction evidence="1">
        <text>(S)-2,3,4,5-tetrahydrodipicolinate + NAD(+) + H2O = (2S,4S)-4-hydroxy-2,3,4,5-tetrahydrodipicolinate + NADH + H(+)</text>
        <dbReference type="Rhea" id="RHEA:35323"/>
        <dbReference type="ChEBI" id="CHEBI:15377"/>
        <dbReference type="ChEBI" id="CHEBI:15378"/>
        <dbReference type="ChEBI" id="CHEBI:16845"/>
        <dbReference type="ChEBI" id="CHEBI:57540"/>
        <dbReference type="ChEBI" id="CHEBI:57945"/>
        <dbReference type="ChEBI" id="CHEBI:67139"/>
        <dbReference type="EC" id="1.17.1.8"/>
    </reaction>
</comment>
<comment type="catalytic activity">
    <reaction evidence="1">
        <text>(S)-2,3,4,5-tetrahydrodipicolinate + NADP(+) + H2O = (2S,4S)-4-hydroxy-2,3,4,5-tetrahydrodipicolinate + NADPH + H(+)</text>
        <dbReference type="Rhea" id="RHEA:35331"/>
        <dbReference type="ChEBI" id="CHEBI:15377"/>
        <dbReference type="ChEBI" id="CHEBI:15378"/>
        <dbReference type="ChEBI" id="CHEBI:16845"/>
        <dbReference type="ChEBI" id="CHEBI:57783"/>
        <dbReference type="ChEBI" id="CHEBI:58349"/>
        <dbReference type="ChEBI" id="CHEBI:67139"/>
        <dbReference type="EC" id="1.17.1.8"/>
    </reaction>
</comment>
<comment type="pathway">
    <text evidence="1">Amino-acid biosynthesis; L-lysine biosynthesis via DAP pathway; (S)-tetrahydrodipicolinate from L-aspartate: step 4/4.</text>
</comment>
<comment type="subcellular location">
    <subcellularLocation>
        <location evidence="1">Cytoplasm</location>
    </subcellularLocation>
</comment>
<comment type="similarity">
    <text evidence="1">Belongs to the DapB family.</text>
</comment>
<comment type="caution">
    <text evidence="2">Was originally thought to be a dihydrodipicolinate reductase (DHDPR), catalyzing the conversion of dihydrodipicolinate to tetrahydrodipicolinate. However, it was shown in E.coli that the substrate of the enzymatic reaction is not dihydrodipicolinate (DHDP) but in fact (2S,4S)-4-hydroxy-2,3,4,5-tetrahydrodipicolinic acid (HTPA), the product released by the DapA-catalyzed reaction.</text>
</comment>
<gene>
    <name evidence="1" type="primary">dapB</name>
    <name type="ordered locus">BPSL2941</name>
</gene>
<sequence>MSSMKIAIAGASGRMGRMLIEAVLAAPDATLAGALDRTGSPQLGQDAGAFLGKQTGVALTDDIERVCAEADYLIDFTRPEGTLAHLDAALRHDVKLVIGTTGFSEPQKAQLRAAGGKIALVFSANMSVGVNVTMKLLEFAAKQFAQGYDIEIIEAHHRHKVDAPSGTALMMGETIAAATGRTLDDCAVYGRHGVTGERDPSTIGFSAIRGGDIVGDHTVLFAGIGERIEITHKSASRVSYAQGALRAARFLAGHQAGFFDMQDVLGLR</sequence>
<keyword id="KW-0028">Amino-acid biosynthesis</keyword>
<keyword id="KW-0963">Cytoplasm</keyword>
<keyword id="KW-0220">Diaminopimelate biosynthesis</keyword>
<keyword id="KW-0457">Lysine biosynthesis</keyword>
<keyword id="KW-0520">NAD</keyword>
<keyword id="KW-0521">NADP</keyword>
<keyword id="KW-0560">Oxidoreductase</keyword>
<keyword id="KW-1185">Reference proteome</keyword>
<name>DAPB_BURPS</name>
<protein>
    <recommendedName>
        <fullName evidence="1">4-hydroxy-tetrahydrodipicolinate reductase</fullName>
        <shortName evidence="1">HTPA reductase</shortName>
        <ecNumber evidence="1">1.17.1.8</ecNumber>
    </recommendedName>
</protein>
<dbReference type="EC" id="1.17.1.8" evidence="1"/>
<dbReference type="EMBL" id="BX571965">
    <property type="protein sequence ID" value="CAH36951.1"/>
    <property type="molecule type" value="Genomic_DNA"/>
</dbReference>
<dbReference type="RefSeq" id="YP_109535.1">
    <property type="nucleotide sequence ID" value="NC_006350.1"/>
</dbReference>
<dbReference type="SMR" id="Q63QT3"/>
<dbReference type="STRING" id="272560.BPSL2941"/>
<dbReference type="KEGG" id="bps:BPSL2941"/>
<dbReference type="PATRIC" id="fig|272560.6.peg.3361"/>
<dbReference type="eggNOG" id="COG0289">
    <property type="taxonomic scope" value="Bacteria"/>
</dbReference>
<dbReference type="UniPathway" id="UPA00034">
    <property type="reaction ID" value="UER00018"/>
</dbReference>
<dbReference type="Proteomes" id="UP000000605">
    <property type="component" value="Chromosome 1"/>
</dbReference>
<dbReference type="GO" id="GO:0005829">
    <property type="term" value="C:cytosol"/>
    <property type="evidence" value="ECO:0007669"/>
    <property type="project" value="TreeGrafter"/>
</dbReference>
<dbReference type="GO" id="GO:0008839">
    <property type="term" value="F:4-hydroxy-tetrahydrodipicolinate reductase"/>
    <property type="evidence" value="ECO:0007669"/>
    <property type="project" value="UniProtKB-EC"/>
</dbReference>
<dbReference type="GO" id="GO:0051287">
    <property type="term" value="F:NAD binding"/>
    <property type="evidence" value="ECO:0007669"/>
    <property type="project" value="UniProtKB-UniRule"/>
</dbReference>
<dbReference type="GO" id="GO:0050661">
    <property type="term" value="F:NADP binding"/>
    <property type="evidence" value="ECO:0007669"/>
    <property type="project" value="UniProtKB-UniRule"/>
</dbReference>
<dbReference type="GO" id="GO:0016726">
    <property type="term" value="F:oxidoreductase activity, acting on CH or CH2 groups, NAD or NADP as acceptor"/>
    <property type="evidence" value="ECO:0007669"/>
    <property type="project" value="UniProtKB-UniRule"/>
</dbReference>
<dbReference type="GO" id="GO:0019877">
    <property type="term" value="P:diaminopimelate biosynthetic process"/>
    <property type="evidence" value="ECO:0007669"/>
    <property type="project" value="UniProtKB-UniRule"/>
</dbReference>
<dbReference type="GO" id="GO:0009089">
    <property type="term" value="P:lysine biosynthetic process via diaminopimelate"/>
    <property type="evidence" value="ECO:0007669"/>
    <property type="project" value="UniProtKB-UniRule"/>
</dbReference>
<dbReference type="CDD" id="cd02274">
    <property type="entry name" value="DHDPR_N"/>
    <property type="match status" value="1"/>
</dbReference>
<dbReference type="FunFam" id="3.30.360.10:FF:000004">
    <property type="entry name" value="4-hydroxy-tetrahydrodipicolinate reductase"/>
    <property type="match status" value="1"/>
</dbReference>
<dbReference type="FunFam" id="3.40.50.720:FF:000048">
    <property type="entry name" value="4-hydroxy-tetrahydrodipicolinate reductase"/>
    <property type="match status" value="1"/>
</dbReference>
<dbReference type="Gene3D" id="3.30.360.10">
    <property type="entry name" value="Dihydrodipicolinate Reductase, domain 2"/>
    <property type="match status" value="1"/>
</dbReference>
<dbReference type="Gene3D" id="3.40.50.720">
    <property type="entry name" value="NAD(P)-binding Rossmann-like Domain"/>
    <property type="match status" value="1"/>
</dbReference>
<dbReference type="HAMAP" id="MF_00102">
    <property type="entry name" value="DapB"/>
    <property type="match status" value="1"/>
</dbReference>
<dbReference type="InterPro" id="IPR022663">
    <property type="entry name" value="DapB_C"/>
</dbReference>
<dbReference type="InterPro" id="IPR000846">
    <property type="entry name" value="DapB_N"/>
</dbReference>
<dbReference type="InterPro" id="IPR022664">
    <property type="entry name" value="DapB_N_CS"/>
</dbReference>
<dbReference type="InterPro" id="IPR023940">
    <property type="entry name" value="DHDPR_bac"/>
</dbReference>
<dbReference type="InterPro" id="IPR036291">
    <property type="entry name" value="NAD(P)-bd_dom_sf"/>
</dbReference>
<dbReference type="NCBIfam" id="TIGR00036">
    <property type="entry name" value="dapB"/>
    <property type="match status" value="1"/>
</dbReference>
<dbReference type="PANTHER" id="PTHR20836:SF0">
    <property type="entry name" value="4-HYDROXY-TETRAHYDRODIPICOLINATE REDUCTASE 1, CHLOROPLASTIC-RELATED"/>
    <property type="match status" value="1"/>
</dbReference>
<dbReference type="PANTHER" id="PTHR20836">
    <property type="entry name" value="DIHYDRODIPICOLINATE REDUCTASE"/>
    <property type="match status" value="1"/>
</dbReference>
<dbReference type="Pfam" id="PF05173">
    <property type="entry name" value="DapB_C"/>
    <property type="match status" value="1"/>
</dbReference>
<dbReference type="Pfam" id="PF01113">
    <property type="entry name" value="DapB_N"/>
    <property type="match status" value="1"/>
</dbReference>
<dbReference type="PIRSF" id="PIRSF000161">
    <property type="entry name" value="DHPR"/>
    <property type="match status" value="1"/>
</dbReference>
<dbReference type="SUPFAM" id="SSF55347">
    <property type="entry name" value="Glyceraldehyde-3-phosphate dehydrogenase-like, C-terminal domain"/>
    <property type="match status" value="1"/>
</dbReference>
<dbReference type="SUPFAM" id="SSF51735">
    <property type="entry name" value="NAD(P)-binding Rossmann-fold domains"/>
    <property type="match status" value="1"/>
</dbReference>
<dbReference type="PROSITE" id="PS01298">
    <property type="entry name" value="DAPB"/>
    <property type="match status" value="1"/>
</dbReference>
<proteinExistence type="inferred from homology"/>
<organism>
    <name type="scientific">Burkholderia pseudomallei (strain K96243)</name>
    <dbReference type="NCBI Taxonomy" id="272560"/>
    <lineage>
        <taxon>Bacteria</taxon>
        <taxon>Pseudomonadati</taxon>
        <taxon>Pseudomonadota</taxon>
        <taxon>Betaproteobacteria</taxon>
        <taxon>Burkholderiales</taxon>
        <taxon>Burkholderiaceae</taxon>
        <taxon>Burkholderia</taxon>
        <taxon>pseudomallei group</taxon>
    </lineage>
</organism>
<reference key="1">
    <citation type="journal article" date="2004" name="Proc. Natl. Acad. Sci. U.S.A.">
        <title>Genomic plasticity of the causative agent of melioidosis, Burkholderia pseudomallei.</title>
        <authorList>
            <person name="Holden M.T.G."/>
            <person name="Titball R.W."/>
            <person name="Peacock S.J."/>
            <person name="Cerdeno-Tarraga A.-M."/>
            <person name="Atkins T."/>
            <person name="Crossman L.C."/>
            <person name="Pitt T."/>
            <person name="Churcher C."/>
            <person name="Mungall K.L."/>
            <person name="Bentley S.D."/>
            <person name="Sebaihia M."/>
            <person name="Thomson N.R."/>
            <person name="Bason N."/>
            <person name="Beacham I.R."/>
            <person name="Brooks K."/>
            <person name="Brown K.A."/>
            <person name="Brown N.F."/>
            <person name="Challis G.L."/>
            <person name="Cherevach I."/>
            <person name="Chillingworth T."/>
            <person name="Cronin A."/>
            <person name="Crossett B."/>
            <person name="Davis P."/>
            <person name="DeShazer D."/>
            <person name="Feltwell T."/>
            <person name="Fraser A."/>
            <person name="Hance Z."/>
            <person name="Hauser H."/>
            <person name="Holroyd S."/>
            <person name="Jagels K."/>
            <person name="Keith K.E."/>
            <person name="Maddison M."/>
            <person name="Moule S."/>
            <person name="Price C."/>
            <person name="Quail M.A."/>
            <person name="Rabbinowitsch E."/>
            <person name="Rutherford K."/>
            <person name="Sanders M."/>
            <person name="Simmonds M."/>
            <person name="Songsivilai S."/>
            <person name="Stevens K."/>
            <person name="Tumapa S."/>
            <person name="Vesaratchavest M."/>
            <person name="Whitehead S."/>
            <person name="Yeats C."/>
            <person name="Barrell B.G."/>
            <person name="Oyston P.C.F."/>
            <person name="Parkhill J."/>
        </authorList>
    </citation>
    <scope>NUCLEOTIDE SEQUENCE [LARGE SCALE GENOMIC DNA]</scope>
    <source>
        <strain>K96243</strain>
    </source>
</reference>